<organism>
    <name type="scientific">Salmonella dublin (strain CT_02021853)</name>
    <dbReference type="NCBI Taxonomy" id="439851"/>
    <lineage>
        <taxon>Bacteria</taxon>
        <taxon>Pseudomonadati</taxon>
        <taxon>Pseudomonadota</taxon>
        <taxon>Gammaproteobacteria</taxon>
        <taxon>Enterobacterales</taxon>
        <taxon>Enterobacteriaceae</taxon>
        <taxon>Salmonella</taxon>
    </lineage>
</organism>
<comment type="similarity">
    <text evidence="1">Belongs to the UPF0502 family.</text>
</comment>
<accession>B5FKZ6</accession>
<protein>
    <recommendedName>
        <fullName evidence="1">UPF0502 protein YceH</fullName>
    </recommendedName>
</protein>
<name>YCEH_SALDC</name>
<reference key="1">
    <citation type="journal article" date="2011" name="J. Bacteriol.">
        <title>Comparative genomics of 28 Salmonella enterica isolates: evidence for CRISPR-mediated adaptive sublineage evolution.</title>
        <authorList>
            <person name="Fricke W.F."/>
            <person name="Mammel M.K."/>
            <person name="McDermott P.F."/>
            <person name="Tartera C."/>
            <person name="White D.G."/>
            <person name="Leclerc J.E."/>
            <person name="Ravel J."/>
            <person name="Cebula T.A."/>
        </authorList>
    </citation>
    <scope>NUCLEOTIDE SEQUENCE [LARGE SCALE GENOMIC DNA]</scope>
    <source>
        <strain>CT_02021853</strain>
    </source>
</reference>
<gene>
    <name evidence="1" type="primary">yceH</name>
    <name type="ordered locus">SeD_A2204</name>
</gene>
<proteinExistence type="inferred from homology"/>
<evidence type="ECO:0000255" key="1">
    <source>
        <dbReference type="HAMAP-Rule" id="MF_01584"/>
    </source>
</evidence>
<sequence length="215" mass="24120">MKYELTATEARVIGCLLEKQVTTPEQYPLSVNGVVTACNQKTNREPVMNLTEQEVQEQLDNLVKRHFLRTVSGFGNRVTKYEQRFCNSEFGDLKLSAAEVALVTTLLLRGAQTPGELRSRASRMHEFSDMAEVESTLERLASREDGPYVVRLAREPGKRESRYMHLFCGDVDELSLQTSAPESASGDLQSRVEALESEVAELKQRLDSLLAHLGE</sequence>
<feature type="chain" id="PRO_1000201251" description="UPF0502 protein YceH">
    <location>
        <begin position="1"/>
        <end position="215"/>
    </location>
</feature>
<dbReference type="EMBL" id="CP001144">
    <property type="protein sequence ID" value="ACH75194.1"/>
    <property type="molecule type" value="Genomic_DNA"/>
</dbReference>
<dbReference type="RefSeq" id="WP_000873047.1">
    <property type="nucleotide sequence ID" value="NC_011205.1"/>
</dbReference>
<dbReference type="SMR" id="B5FKZ6"/>
<dbReference type="KEGG" id="sed:SeD_A2204"/>
<dbReference type="HOGENOM" id="CLU_057831_2_0_6"/>
<dbReference type="Proteomes" id="UP000008322">
    <property type="component" value="Chromosome"/>
</dbReference>
<dbReference type="FunFam" id="1.10.10.10:FF:000196">
    <property type="entry name" value="UPF0502 protein YceH"/>
    <property type="match status" value="1"/>
</dbReference>
<dbReference type="Gene3D" id="1.10.10.10">
    <property type="entry name" value="Winged helix-like DNA-binding domain superfamily/Winged helix DNA-binding domain"/>
    <property type="match status" value="2"/>
</dbReference>
<dbReference type="HAMAP" id="MF_01584">
    <property type="entry name" value="UPF0502"/>
    <property type="match status" value="1"/>
</dbReference>
<dbReference type="InterPro" id="IPR007432">
    <property type="entry name" value="DUF480"/>
</dbReference>
<dbReference type="InterPro" id="IPR036388">
    <property type="entry name" value="WH-like_DNA-bd_sf"/>
</dbReference>
<dbReference type="InterPro" id="IPR036390">
    <property type="entry name" value="WH_DNA-bd_sf"/>
</dbReference>
<dbReference type="NCBIfam" id="NF008413">
    <property type="entry name" value="PRK11239.1"/>
    <property type="match status" value="1"/>
</dbReference>
<dbReference type="PANTHER" id="PTHR38768">
    <property type="entry name" value="UPF0502 PROTEIN YCEH"/>
    <property type="match status" value="1"/>
</dbReference>
<dbReference type="PANTHER" id="PTHR38768:SF1">
    <property type="entry name" value="UPF0502 PROTEIN YCEH"/>
    <property type="match status" value="1"/>
</dbReference>
<dbReference type="Pfam" id="PF04337">
    <property type="entry name" value="DUF480"/>
    <property type="match status" value="1"/>
</dbReference>
<dbReference type="SUPFAM" id="SSF46785">
    <property type="entry name" value="Winged helix' DNA-binding domain"/>
    <property type="match status" value="2"/>
</dbReference>